<sequence length="187" mass="20724">MSRIGKLPIKLPTTVEISHQSDATVQVINVKGKFGSLQRTLPEELKIEQIHNDNGSSLIVSFENQTRTNKSLQGLYRTLINNMVIGVTEQFVIILTLQGVGYRASVQGKSLVLNLGYSHPVEIDIPEGITVEVTQNTTLNIKACDKEQLGLFAAKVRAWRPPEPYKGKGILYKNEQILRKAGKSGKK</sequence>
<name>RK6_THAPS</name>
<keyword id="KW-0150">Chloroplast</keyword>
<keyword id="KW-0934">Plastid</keyword>
<keyword id="KW-0687">Ribonucleoprotein</keyword>
<keyword id="KW-0689">Ribosomal protein</keyword>
<keyword id="KW-0694">RNA-binding</keyword>
<keyword id="KW-0699">rRNA-binding</keyword>
<comment type="function">
    <text evidence="1">Binds 23S rRNA.</text>
</comment>
<comment type="subunit">
    <text evidence="1">Part of the 50S ribosomal subunit.</text>
</comment>
<comment type="subcellular location">
    <subcellularLocation>
        <location>Plastid</location>
        <location>Chloroplast</location>
    </subcellularLocation>
</comment>
<comment type="similarity">
    <text evidence="2">Belongs to the universal ribosomal protein uL6 family.</text>
</comment>
<geneLocation type="chloroplast"/>
<reference key="1">
    <citation type="journal article" date="2007" name="Mol. Genet. Genomics">
        <title>Chloroplast genomes of the diatoms Phaeodactylum tricornutum and Thalassiosira pseudonana: comparison with other plastid genomes of the red lineage.</title>
        <authorList>
            <person name="Oudot-Le Secq M.-P."/>
            <person name="Grimwood J."/>
            <person name="Shapiro H."/>
            <person name="Armbrust E.V."/>
            <person name="Bowler C."/>
            <person name="Green B.R."/>
        </authorList>
    </citation>
    <scope>NUCLEOTIDE SEQUENCE [LARGE SCALE GENOMIC DNA]</scope>
    <source>
        <strain>CCMP1335 / NEPCC58 / CCAP 1085/12</strain>
    </source>
</reference>
<evidence type="ECO:0000250" key="1"/>
<evidence type="ECO:0000305" key="2"/>
<dbReference type="EMBL" id="EF067921">
    <property type="protein sequence ID" value="ABK20822.1"/>
    <property type="molecule type" value="Genomic_DNA"/>
</dbReference>
<dbReference type="RefSeq" id="YP_874599.1">
    <property type="nucleotide sequence ID" value="NC_008589.1"/>
</dbReference>
<dbReference type="SMR" id="A0T0Y7"/>
<dbReference type="STRING" id="35128.A0T0Y7"/>
<dbReference type="GeneID" id="4524762"/>
<dbReference type="InParanoid" id="A0T0Y7"/>
<dbReference type="GO" id="GO:0009507">
    <property type="term" value="C:chloroplast"/>
    <property type="evidence" value="ECO:0007669"/>
    <property type="project" value="UniProtKB-SubCell"/>
</dbReference>
<dbReference type="GO" id="GO:1990904">
    <property type="term" value="C:ribonucleoprotein complex"/>
    <property type="evidence" value="ECO:0007669"/>
    <property type="project" value="UniProtKB-KW"/>
</dbReference>
<dbReference type="GO" id="GO:0005840">
    <property type="term" value="C:ribosome"/>
    <property type="evidence" value="ECO:0007669"/>
    <property type="project" value="UniProtKB-KW"/>
</dbReference>
<dbReference type="GO" id="GO:0019843">
    <property type="term" value="F:rRNA binding"/>
    <property type="evidence" value="ECO:0007669"/>
    <property type="project" value="UniProtKB-UniRule"/>
</dbReference>
<dbReference type="GO" id="GO:0003735">
    <property type="term" value="F:structural constituent of ribosome"/>
    <property type="evidence" value="ECO:0000318"/>
    <property type="project" value="GO_Central"/>
</dbReference>
<dbReference type="GO" id="GO:0006412">
    <property type="term" value="P:translation"/>
    <property type="evidence" value="ECO:0007669"/>
    <property type="project" value="UniProtKB-UniRule"/>
</dbReference>
<dbReference type="FunFam" id="3.90.930.12:FF:000001">
    <property type="entry name" value="50S ribosomal protein L6"/>
    <property type="match status" value="1"/>
</dbReference>
<dbReference type="FunFam" id="3.90.930.12:FF:000002">
    <property type="entry name" value="50S ribosomal protein L6"/>
    <property type="match status" value="1"/>
</dbReference>
<dbReference type="Gene3D" id="3.90.930.12">
    <property type="entry name" value="Ribosomal protein L6, alpha-beta domain"/>
    <property type="match status" value="2"/>
</dbReference>
<dbReference type="HAMAP" id="MF_01365_B">
    <property type="entry name" value="Ribosomal_uL6_B"/>
    <property type="match status" value="1"/>
</dbReference>
<dbReference type="InterPro" id="IPR000702">
    <property type="entry name" value="Ribosomal_uL6-like"/>
</dbReference>
<dbReference type="InterPro" id="IPR036789">
    <property type="entry name" value="Ribosomal_uL6-like_a/b-dom_sf"/>
</dbReference>
<dbReference type="InterPro" id="IPR020040">
    <property type="entry name" value="Ribosomal_uL6_a/b-dom"/>
</dbReference>
<dbReference type="InterPro" id="IPR019906">
    <property type="entry name" value="Ribosomal_uL6_bac-type"/>
</dbReference>
<dbReference type="InterPro" id="IPR002358">
    <property type="entry name" value="Ribosomal_uL6_CS"/>
</dbReference>
<dbReference type="NCBIfam" id="TIGR03654">
    <property type="entry name" value="L6_bact"/>
    <property type="match status" value="1"/>
</dbReference>
<dbReference type="PANTHER" id="PTHR11655">
    <property type="entry name" value="60S/50S RIBOSOMAL PROTEIN L6/L9"/>
    <property type="match status" value="1"/>
</dbReference>
<dbReference type="PANTHER" id="PTHR11655:SF14">
    <property type="entry name" value="LARGE RIBOSOMAL SUBUNIT PROTEIN UL6M"/>
    <property type="match status" value="1"/>
</dbReference>
<dbReference type="Pfam" id="PF00347">
    <property type="entry name" value="Ribosomal_L6"/>
    <property type="match status" value="2"/>
</dbReference>
<dbReference type="PIRSF" id="PIRSF002162">
    <property type="entry name" value="Ribosomal_L6"/>
    <property type="match status" value="1"/>
</dbReference>
<dbReference type="PRINTS" id="PR00059">
    <property type="entry name" value="RIBOSOMALL6"/>
</dbReference>
<dbReference type="SUPFAM" id="SSF56053">
    <property type="entry name" value="Ribosomal protein L6"/>
    <property type="match status" value="2"/>
</dbReference>
<dbReference type="PROSITE" id="PS00525">
    <property type="entry name" value="RIBOSOMAL_L6_1"/>
    <property type="match status" value="1"/>
</dbReference>
<feature type="chain" id="PRO_0000276581" description="Large ribosomal subunit protein uL6c">
    <location>
        <begin position="1"/>
        <end position="187"/>
    </location>
</feature>
<gene>
    <name type="primary">rpl6</name>
</gene>
<protein>
    <recommendedName>
        <fullName evidence="2">Large ribosomal subunit protein uL6c</fullName>
    </recommendedName>
    <alternativeName>
        <fullName>50S ribosomal protein L6, chloroplastic</fullName>
    </alternativeName>
</protein>
<proteinExistence type="inferred from homology"/>
<organism>
    <name type="scientific">Thalassiosira pseudonana</name>
    <name type="common">Marine diatom</name>
    <name type="synonym">Cyclotella nana</name>
    <dbReference type="NCBI Taxonomy" id="35128"/>
    <lineage>
        <taxon>Eukaryota</taxon>
        <taxon>Sar</taxon>
        <taxon>Stramenopiles</taxon>
        <taxon>Ochrophyta</taxon>
        <taxon>Bacillariophyta</taxon>
        <taxon>Coscinodiscophyceae</taxon>
        <taxon>Thalassiosirophycidae</taxon>
        <taxon>Thalassiosirales</taxon>
        <taxon>Thalassiosiraceae</taxon>
        <taxon>Thalassiosira</taxon>
    </lineage>
</organism>
<accession>A0T0Y7</accession>